<name>TRM56_PYRHO</name>
<sequence>MIVVLRLGHRPERDKRVTTHVALTARAFGADGIIIASEEDEKVKESVEDVVKRWGGPFFIEFNRNWRKVMKEFTGVKVHLTMYGLHVDDVIEELKEKLKKGEDFMIIVGAEKVPREVYELADYNVAIGNQPHSEVAALAVLLDRLLEGKGLKKEFKGAKIKIVPQARGKKVVEVQGYAEQDKAEGKATPGKNWENSGFTGDNP</sequence>
<keyword id="KW-0002">3D-structure</keyword>
<keyword id="KW-0963">Cytoplasm</keyword>
<keyword id="KW-0489">Methyltransferase</keyword>
<keyword id="KW-0949">S-adenosyl-L-methionine</keyword>
<keyword id="KW-0808">Transferase</keyword>
<keyword id="KW-0819">tRNA processing</keyword>
<reference key="1">
    <citation type="journal article" date="1998" name="DNA Res.">
        <title>Complete sequence and gene organization of the genome of a hyper-thermophilic archaebacterium, Pyrococcus horikoshii OT3.</title>
        <authorList>
            <person name="Kawarabayasi Y."/>
            <person name="Sawada M."/>
            <person name="Horikawa H."/>
            <person name="Haikawa Y."/>
            <person name="Hino Y."/>
            <person name="Yamamoto S."/>
            <person name="Sekine M."/>
            <person name="Baba S."/>
            <person name="Kosugi H."/>
            <person name="Hosoyama A."/>
            <person name="Nagai Y."/>
            <person name="Sakai M."/>
            <person name="Ogura K."/>
            <person name="Otsuka R."/>
            <person name="Nakazawa H."/>
            <person name="Takamiya M."/>
            <person name="Ohfuku Y."/>
            <person name="Funahashi T."/>
            <person name="Tanaka T."/>
            <person name="Kudoh Y."/>
            <person name="Yamazaki J."/>
            <person name="Kushida N."/>
            <person name="Oguchi A."/>
            <person name="Aoki K."/>
            <person name="Yoshizawa T."/>
            <person name="Nakamura Y."/>
            <person name="Robb F.T."/>
            <person name="Horikoshi K."/>
            <person name="Masuchi Y."/>
            <person name="Shizuya H."/>
            <person name="Kikuchi H."/>
        </authorList>
    </citation>
    <scope>NUCLEOTIDE SEQUENCE [LARGE SCALE GENOMIC DNA]</scope>
    <source>
        <strain>ATCC 700860 / DSM 12428 / JCM 9974 / NBRC 100139 / OT-3</strain>
    </source>
</reference>
<reference key="2">
    <citation type="journal article" date="2008" name="J. Mol. Biol.">
        <title>Crystal structure and mutational study of a unique SpoU family archaeal methylase that forms 2'-O-methylcytidine at position 56 of tRNA.</title>
        <authorList>
            <person name="Kuratani M."/>
            <person name="Bessho Y."/>
            <person name="Nishimoto M."/>
            <person name="Grosjean H."/>
            <person name="Yokoyama S."/>
        </authorList>
    </citation>
    <scope>X-RAY CRYSTALLOGRAPHY (2.48 ANGSTROMS) OF 1-195 IN COMPLEX WITH S-ADENOSYL-L-METHIONINE</scope>
    <scope>FUNCTION</scope>
    <scope>CATALYTIC ACTIVITY</scope>
    <scope>SUBUNIT</scope>
    <scope>MUTAGENESIS OF ARG-16; HIS-20; ARG-26 AND GLU-111</scope>
</reference>
<feature type="chain" id="PRO_0000146935" description="tRNA (cytidine(56)-2'-O)-methyltransferase">
    <location>
        <begin position="1"/>
        <end position="203"/>
    </location>
</feature>
<feature type="region of interest" description="Disordered" evidence="1">
    <location>
        <begin position="178"/>
        <end position="203"/>
    </location>
</feature>
<feature type="compositionally biased region" description="Polar residues" evidence="1">
    <location>
        <begin position="193"/>
        <end position="203"/>
    </location>
</feature>
<feature type="binding site" evidence="2">
    <location>
        <position position="80"/>
    </location>
    <ligand>
        <name>S-adenosyl-L-methionine</name>
        <dbReference type="ChEBI" id="CHEBI:59789"/>
    </ligand>
</feature>
<feature type="binding site">
    <location>
        <begin position="109"/>
        <end position="113"/>
    </location>
    <ligand>
        <name>S-adenosyl-L-methionine</name>
        <dbReference type="ChEBI" id="CHEBI:59789"/>
    </ligand>
</feature>
<feature type="binding site">
    <location>
        <begin position="127"/>
        <end position="134"/>
    </location>
    <ligand>
        <name>S-adenosyl-L-methionine</name>
        <dbReference type="ChEBI" id="CHEBI:59789"/>
    </ligand>
</feature>
<feature type="mutagenesis site" description="Loss of activity." evidence="2">
    <original>R</original>
    <variation>A</variation>
    <location>
        <position position="16"/>
    </location>
</feature>
<feature type="mutagenesis site" description="Reduced enzyme activity." evidence="2">
    <original>H</original>
    <variation>A</variation>
    <location>
        <position position="20"/>
    </location>
</feature>
<feature type="mutagenesis site" description="No effect on enzyme activity." evidence="2">
    <original>R</original>
    <variation>A</variation>
    <location>
        <position position="26"/>
    </location>
</feature>
<feature type="mutagenesis site" description="Reduced enzyme activity." evidence="2">
    <original>E</original>
    <variation>A</variation>
    <location>
        <position position="111"/>
    </location>
</feature>
<feature type="strand" evidence="4">
    <location>
        <begin position="2"/>
        <end position="6"/>
    </location>
</feature>
<feature type="helix" evidence="4">
    <location>
        <begin position="16"/>
        <end position="27"/>
    </location>
</feature>
<feature type="strand" evidence="4">
    <location>
        <begin position="31"/>
        <end position="38"/>
    </location>
</feature>
<feature type="helix" evidence="4">
    <location>
        <begin position="41"/>
        <end position="54"/>
    </location>
</feature>
<feature type="helix" evidence="4">
    <location>
        <begin position="66"/>
        <end position="72"/>
    </location>
</feature>
<feature type="strand" evidence="4">
    <location>
        <begin position="75"/>
        <end position="80"/>
    </location>
</feature>
<feature type="strand" evidence="4">
    <location>
        <begin position="84"/>
        <end position="86"/>
    </location>
</feature>
<feature type="helix" evidence="4">
    <location>
        <begin position="87"/>
        <end position="99"/>
    </location>
</feature>
<feature type="strand" evidence="4">
    <location>
        <begin position="104"/>
        <end position="108"/>
    </location>
</feature>
<feature type="helix" evidence="4">
    <location>
        <begin position="115"/>
        <end position="120"/>
    </location>
</feature>
<feature type="strand" evidence="4">
    <location>
        <begin position="122"/>
        <end position="130"/>
    </location>
</feature>
<feature type="helix" evidence="4">
    <location>
        <begin position="134"/>
        <end position="145"/>
    </location>
</feature>
<feature type="turn" evidence="4">
    <location>
        <begin position="146"/>
        <end position="148"/>
    </location>
</feature>
<feature type="helix" evidence="4">
    <location>
        <begin position="149"/>
        <end position="152"/>
    </location>
</feature>
<feature type="strand" evidence="4">
    <location>
        <begin position="159"/>
        <end position="162"/>
    </location>
</feature>
<feature type="strand" evidence="4">
    <location>
        <begin position="166"/>
        <end position="168"/>
    </location>
</feature>
<feature type="strand" evidence="4">
    <location>
        <begin position="171"/>
        <end position="173"/>
    </location>
</feature>
<proteinExistence type="evidence at protein level"/>
<evidence type="ECO:0000256" key="1">
    <source>
        <dbReference type="SAM" id="MobiDB-lite"/>
    </source>
</evidence>
<evidence type="ECO:0000269" key="2">
    <source>
    </source>
</evidence>
<evidence type="ECO:0000305" key="3"/>
<evidence type="ECO:0007829" key="4">
    <source>
        <dbReference type="PDB" id="2YY8"/>
    </source>
</evidence>
<protein>
    <recommendedName>
        <fullName>tRNA (cytidine(56)-2'-O)-methyltransferase</fullName>
        <ecNumber>2.1.1.206</ecNumber>
    </recommendedName>
    <alternativeName>
        <fullName>tRNA ribose 2'-O-methyltransferase aTrm56</fullName>
    </alternativeName>
</protein>
<comment type="function">
    <text evidence="2">Specifically catalyzes the AdoMet-dependent 2'-O-ribose methylation of cytidine at position 56 in tRNAs.</text>
</comment>
<comment type="catalytic activity">
    <reaction evidence="2">
        <text>cytidine(56) in tRNA + S-adenosyl-L-methionine = 2'-O-methylcytidine(56) in tRNA + S-adenosyl-L-homocysteine + H(+)</text>
        <dbReference type="Rhea" id="RHEA:42968"/>
        <dbReference type="Rhea" id="RHEA-COMP:10308"/>
        <dbReference type="Rhea" id="RHEA-COMP:10309"/>
        <dbReference type="ChEBI" id="CHEBI:15378"/>
        <dbReference type="ChEBI" id="CHEBI:57856"/>
        <dbReference type="ChEBI" id="CHEBI:59789"/>
        <dbReference type="ChEBI" id="CHEBI:74495"/>
        <dbReference type="ChEBI" id="CHEBI:82748"/>
        <dbReference type="EC" id="2.1.1.206"/>
    </reaction>
</comment>
<comment type="subunit">
    <text evidence="2">Homodimer.</text>
</comment>
<comment type="subcellular location">
    <subcellularLocation>
        <location evidence="3">Cytoplasm</location>
    </subcellularLocation>
</comment>
<comment type="similarity">
    <text evidence="3">Belongs to the aTrm56 family.</text>
</comment>
<comment type="sequence caution" evidence="3">
    <conflict type="erroneous initiation">
        <sequence resource="EMBL-CDS" id="BAA29547"/>
    </conflict>
</comment>
<gene>
    <name type="ordered locus">PH0461</name>
</gene>
<dbReference type="EC" id="2.1.1.206"/>
<dbReference type="EMBL" id="BA000001">
    <property type="protein sequence ID" value="BAA29547.1"/>
    <property type="status" value="ALT_INIT"/>
    <property type="molecule type" value="Genomic_DNA"/>
</dbReference>
<dbReference type="PIR" id="F71157">
    <property type="entry name" value="F71157"/>
</dbReference>
<dbReference type="RefSeq" id="WP_048053133.1">
    <property type="nucleotide sequence ID" value="NC_000961.1"/>
</dbReference>
<dbReference type="PDB" id="2YY8">
    <property type="method" value="X-ray"/>
    <property type="resolution" value="2.48 A"/>
    <property type="chains" value="A/B=1-195"/>
</dbReference>
<dbReference type="PDBsum" id="2YY8"/>
<dbReference type="SMR" id="O58214"/>
<dbReference type="STRING" id="70601.gene:9377392"/>
<dbReference type="EnsemblBacteria" id="BAA29547">
    <property type="protein sequence ID" value="BAA29547"/>
    <property type="gene ID" value="BAA29547"/>
</dbReference>
<dbReference type="GeneID" id="1444355"/>
<dbReference type="KEGG" id="pho:PH0461"/>
<dbReference type="eggNOG" id="arCOG01857">
    <property type="taxonomic scope" value="Archaea"/>
</dbReference>
<dbReference type="OrthoDB" id="14397at2157"/>
<dbReference type="BRENDA" id="2.1.1.206">
    <property type="organism ID" value="5244"/>
</dbReference>
<dbReference type="EvolutionaryTrace" id="O58214"/>
<dbReference type="Proteomes" id="UP000000752">
    <property type="component" value="Chromosome"/>
</dbReference>
<dbReference type="GO" id="GO:0005737">
    <property type="term" value="C:cytoplasm"/>
    <property type="evidence" value="ECO:0007669"/>
    <property type="project" value="UniProtKB-SubCell"/>
</dbReference>
<dbReference type="GO" id="GO:0106059">
    <property type="term" value="F:tRNA (cytidine(56)-2'-O)-methyltransferase activity"/>
    <property type="evidence" value="ECO:0007669"/>
    <property type="project" value="UniProtKB-EC"/>
</dbReference>
<dbReference type="GO" id="GO:0002128">
    <property type="term" value="P:tRNA nucleoside ribose methylation"/>
    <property type="evidence" value="ECO:0007669"/>
    <property type="project" value="UniProtKB-UniRule"/>
</dbReference>
<dbReference type="CDD" id="cd18083">
    <property type="entry name" value="aTrm56-like"/>
    <property type="match status" value="1"/>
</dbReference>
<dbReference type="Gene3D" id="3.40.1280.10">
    <property type="match status" value="1"/>
</dbReference>
<dbReference type="HAMAP" id="MF_00077">
    <property type="entry name" value="tRNA_methyltr_aTrm56"/>
    <property type="match status" value="1"/>
</dbReference>
<dbReference type="InterPro" id="IPR029028">
    <property type="entry name" value="Alpha/beta_knot_MTases"/>
</dbReference>
<dbReference type="InterPro" id="IPR029026">
    <property type="entry name" value="tRNA_m1G_MTases_N"/>
</dbReference>
<dbReference type="InterPro" id="IPR002845">
    <property type="entry name" value="tRNA_mtfrase_aTrm56"/>
</dbReference>
<dbReference type="NCBIfam" id="NF003048">
    <property type="entry name" value="PRK03958.1"/>
    <property type="match status" value="1"/>
</dbReference>
<dbReference type="PANTHER" id="PTHR42197">
    <property type="entry name" value="TRNA (CYTIDINE(56)-2'-O)-METHYLTRANSFERASE"/>
    <property type="match status" value="1"/>
</dbReference>
<dbReference type="PANTHER" id="PTHR42197:SF1">
    <property type="entry name" value="TRNA (CYTIDINE(56)-2'-O)-METHYLTRANSFERASE"/>
    <property type="match status" value="1"/>
</dbReference>
<dbReference type="Pfam" id="PF01994">
    <property type="entry name" value="Trm56"/>
    <property type="match status" value="1"/>
</dbReference>
<dbReference type="PIRSF" id="PIRSF016123">
    <property type="entry name" value="UCP016123"/>
    <property type="match status" value="1"/>
</dbReference>
<dbReference type="SUPFAM" id="SSF75217">
    <property type="entry name" value="alpha/beta knot"/>
    <property type="match status" value="1"/>
</dbReference>
<accession>O58214</accession>
<organism>
    <name type="scientific">Pyrococcus horikoshii (strain ATCC 700860 / DSM 12428 / JCM 9974 / NBRC 100139 / OT-3)</name>
    <dbReference type="NCBI Taxonomy" id="70601"/>
    <lineage>
        <taxon>Archaea</taxon>
        <taxon>Methanobacteriati</taxon>
        <taxon>Methanobacteriota</taxon>
        <taxon>Thermococci</taxon>
        <taxon>Thermococcales</taxon>
        <taxon>Thermococcaceae</taxon>
        <taxon>Pyrococcus</taxon>
    </lineage>
</organism>